<accession>Q6P6G2</accession>
<organism>
    <name type="scientific">Rattus norvegicus</name>
    <name type="common">Rat</name>
    <dbReference type="NCBI Taxonomy" id="10116"/>
    <lineage>
        <taxon>Eukaryota</taxon>
        <taxon>Metazoa</taxon>
        <taxon>Chordata</taxon>
        <taxon>Craniata</taxon>
        <taxon>Vertebrata</taxon>
        <taxon>Euteleostomi</taxon>
        <taxon>Mammalia</taxon>
        <taxon>Eutheria</taxon>
        <taxon>Euarchontoglires</taxon>
        <taxon>Glires</taxon>
        <taxon>Rodentia</taxon>
        <taxon>Myomorpha</taxon>
        <taxon>Muroidea</taxon>
        <taxon>Muridae</taxon>
        <taxon>Murinae</taxon>
        <taxon>Rattus</taxon>
    </lineage>
</organism>
<proteinExistence type="evidence at transcript level"/>
<comment type="function">
    <text evidence="1">Exhibits histone deacetylase (HDAC) enhancer properties. May play a role in cell cycle progression and wound repair of bronchial epithelial cells.</text>
</comment>
<comment type="subunit">
    <text evidence="1">Homodimer (By similarity). Interacts with BRS3 (By similarity). Interacts (via N-terminus) with SIN3B (By similarity).</text>
</comment>
<comment type="subcellular location">
    <subcellularLocation>
        <location evidence="1">Golgi apparatus membrane</location>
        <topology evidence="1">Single-pass type II membrane protein</topology>
    </subcellularLocation>
    <subcellularLocation>
        <location evidence="1">Cytoplasm</location>
    </subcellularLocation>
</comment>
<comment type="PTM">
    <text evidence="1">Glycosylated.</text>
</comment>
<name>CF089_RAT</name>
<dbReference type="EMBL" id="BC062242">
    <property type="protein sequence ID" value="AAH62242.1"/>
    <property type="molecule type" value="mRNA"/>
</dbReference>
<dbReference type="RefSeq" id="NP_955411.1">
    <property type="nucleotide sequence ID" value="NM_199379.3"/>
</dbReference>
<dbReference type="SMR" id="Q6P6G2"/>
<dbReference type="FunCoup" id="Q6P6G2">
    <property type="interactions" value="760"/>
</dbReference>
<dbReference type="STRING" id="10116.ENSRNOP00000000631"/>
<dbReference type="PhosphoSitePlus" id="Q6P6G2"/>
<dbReference type="PaxDb" id="10116-ENSRNOP00000000631"/>
<dbReference type="GeneID" id="294311"/>
<dbReference type="KEGG" id="rno:294311"/>
<dbReference type="UCSC" id="RGD:735065">
    <property type="organism name" value="rat"/>
</dbReference>
<dbReference type="AGR" id="RGD:735065"/>
<dbReference type="CTD" id="294311"/>
<dbReference type="RGD" id="735065">
    <property type="gene designation" value="C20h6orf89"/>
</dbReference>
<dbReference type="VEuPathDB" id="HostDB:ENSRNOG00000000524"/>
<dbReference type="eggNOG" id="ENOG502S363">
    <property type="taxonomic scope" value="Eukaryota"/>
</dbReference>
<dbReference type="InParanoid" id="Q6P6G2"/>
<dbReference type="PhylomeDB" id="Q6P6G2"/>
<dbReference type="TreeFam" id="TF335525"/>
<dbReference type="PRO" id="PR:Q6P6G2"/>
<dbReference type="Proteomes" id="UP000002494">
    <property type="component" value="Chromosome 20"/>
</dbReference>
<dbReference type="Bgee" id="ENSRNOG00000000524">
    <property type="expression patterns" value="Expressed in liver and 20 other cell types or tissues"/>
</dbReference>
<dbReference type="ExpressionAtlas" id="Q6P6G2">
    <property type="expression patterns" value="baseline and differential"/>
</dbReference>
<dbReference type="GO" id="GO:0005737">
    <property type="term" value="C:cytoplasm"/>
    <property type="evidence" value="ECO:0000250"/>
    <property type="project" value="UniProtKB"/>
</dbReference>
<dbReference type="GO" id="GO:0000139">
    <property type="term" value="C:Golgi membrane"/>
    <property type="evidence" value="ECO:0000250"/>
    <property type="project" value="UniProtKB"/>
</dbReference>
<dbReference type="GO" id="GO:0030496">
    <property type="term" value="C:midbody"/>
    <property type="evidence" value="ECO:0000250"/>
    <property type="project" value="UniProtKB"/>
</dbReference>
<dbReference type="GO" id="GO:0005886">
    <property type="term" value="C:plasma membrane"/>
    <property type="evidence" value="ECO:0000250"/>
    <property type="project" value="UniProtKB"/>
</dbReference>
<dbReference type="GO" id="GO:0006914">
    <property type="term" value="P:autophagy"/>
    <property type="evidence" value="ECO:0000266"/>
    <property type="project" value="RGD"/>
</dbReference>
<dbReference type="GO" id="GO:0006338">
    <property type="term" value="P:chromatin remodeling"/>
    <property type="evidence" value="ECO:0000250"/>
    <property type="project" value="UniProtKB"/>
</dbReference>
<dbReference type="GO" id="GO:0032963">
    <property type="term" value="P:collagen metabolic process"/>
    <property type="evidence" value="ECO:0000266"/>
    <property type="project" value="RGD"/>
</dbReference>
<dbReference type="GO" id="GO:0097709">
    <property type="term" value="P:connective tissue replacement"/>
    <property type="evidence" value="ECO:0000266"/>
    <property type="project" value="RGD"/>
</dbReference>
<dbReference type="GO" id="GO:0050673">
    <property type="term" value="P:epithelial cell proliferation"/>
    <property type="evidence" value="ECO:0000250"/>
    <property type="project" value="UniProtKB"/>
</dbReference>
<dbReference type="GO" id="GO:0048144">
    <property type="term" value="P:fibroblast proliferation"/>
    <property type="evidence" value="ECO:0000266"/>
    <property type="project" value="RGD"/>
</dbReference>
<dbReference type="GO" id="GO:0045787">
    <property type="term" value="P:positive regulation of cell cycle"/>
    <property type="evidence" value="ECO:0000250"/>
    <property type="project" value="UniProtKB"/>
</dbReference>
<dbReference type="GO" id="GO:1904975">
    <property type="term" value="P:response to bleomycin"/>
    <property type="evidence" value="ECO:0000266"/>
    <property type="project" value="RGD"/>
</dbReference>
<dbReference type="GO" id="GO:0042060">
    <property type="term" value="P:wound healing"/>
    <property type="evidence" value="ECO:0000250"/>
    <property type="project" value="UniProtKB"/>
</dbReference>
<dbReference type="InterPro" id="IPR038757">
    <property type="entry name" value="BRAP"/>
</dbReference>
<dbReference type="PANTHER" id="PTHR35259">
    <property type="entry name" value="BOMBESIN RECEPTOR-ACTIVATED PROTEIN C6ORF89"/>
    <property type="match status" value="1"/>
</dbReference>
<dbReference type="PANTHER" id="PTHR35259:SF1">
    <property type="entry name" value="BOMBESIN RECEPTOR-ACTIVATED PROTEIN C6ORF89"/>
    <property type="match status" value="1"/>
</dbReference>
<feature type="chain" id="PRO_0000237624" description="Bombesin receptor-activated protein C6orf89 homolog">
    <location>
        <begin position="1"/>
        <end position="348"/>
    </location>
</feature>
<feature type="topological domain" description="Cytoplasmic" evidence="3">
    <location>
        <begin position="1"/>
        <end position="58"/>
    </location>
</feature>
<feature type="transmembrane region" description="Helical" evidence="2">
    <location>
        <begin position="59"/>
        <end position="79"/>
    </location>
</feature>
<feature type="topological domain" description="Extracellular" evidence="3">
    <location>
        <begin position="80"/>
        <end position="348"/>
    </location>
</feature>
<evidence type="ECO:0000250" key="1">
    <source>
        <dbReference type="UniProtKB" id="Q6UWU4"/>
    </source>
</evidence>
<evidence type="ECO:0000255" key="2"/>
<evidence type="ECO:0000305" key="3"/>
<protein>
    <recommendedName>
        <fullName>Bombesin receptor-activated protein C6orf89 homolog</fullName>
    </recommendedName>
</protein>
<keyword id="KW-0963">Cytoplasm</keyword>
<keyword id="KW-0325">Glycoprotein</keyword>
<keyword id="KW-0333">Golgi apparatus</keyword>
<keyword id="KW-0472">Membrane</keyword>
<keyword id="KW-1185">Reference proteome</keyword>
<keyword id="KW-0735">Signal-anchor</keyword>
<keyword id="KW-0812">Transmembrane</keyword>
<keyword id="KW-1133">Transmembrane helix</keyword>
<sequence length="348" mass="39572">MDLAANEISIYDKLSETVDLVRQTGHQCGMSEKAIEKFIRQLLEKNEPQRGPPQYPLLIAMYKVLLTLGLILFTAYFVIQPFSSLAPEPVLSGAHTWRSLIHHIRLVSLPITKKYMPENKGVPLQGREEDKPFPDFDPWSSNNCEQNESEPIPANCTVCAQILPLKVTLPEDTPKNFERLRPLVIKTGQPLLSAEIQSFSCQYPEVTEGFTEGVLTKWWRCFPERWFPFPYPWRRPLNRSQILRELFPVFTQLPFPKDASLNKCFLIQPEPVVGSKMHEVHDLFTIGSGEAMLQLIPPFQCRRHCQSVAMPIESGDIGYAGAAHWKVYIVARGVQPLVICDGTTLSEL</sequence>
<reference key="1">
    <citation type="journal article" date="2004" name="Genome Res.">
        <title>The status, quality, and expansion of the NIH full-length cDNA project: the Mammalian Gene Collection (MGC).</title>
        <authorList>
            <consortium name="The MGC Project Team"/>
        </authorList>
    </citation>
    <scope>NUCLEOTIDE SEQUENCE [LARGE SCALE MRNA]</scope>
    <source>
        <tissue>Pituitary</tissue>
    </source>
</reference>